<comment type="function">
    <text evidence="1">RuBisCO catalyzes two reactions: the carboxylation of D-ribulose 1,5-bisphosphate, the primary event in carbon dioxide fixation, as well as the oxidative fragmentation of the pentose substrate in the photorespiration process. Both reactions occur simultaneously and in competition at the same active site.</text>
</comment>
<comment type="catalytic activity">
    <reaction evidence="1">
        <text>2 (2R)-3-phosphoglycerate + 2 H(+) = D-ribulose 1,5-bisphosphate + CO2 + H2O</text>
        <dbReference type="Rhea" id="RHEA:23124"/>
        <dbReference type="ChEBI" id="CHEBI:15377"/>
        <dbReference type="ChEBI" id="CHEBI:15378"/>
        <dbReference type="ChEBI" id="CHEBI:16526"/>
        <dbReference type="ChEBI" id="CHEBI:57870"/>
        <dbReference type="ChEBI" id="CHEBI:58272"/>
        <dbReference type="EC" id="4.1.1.39"/>
    </reaction>
</comment>
<comment type="catalytic activity">
    <reaction evidence="1">
        <text>D-ribulose 1,5-bisphosphate + O2 = 2-phosphoglycolate + (2R)-3-phosphoglycerate + 2 H(+)</text>
        <dbReference type="Rhea" id="RHEA:36631"/>
        <dbReference type="ChEBI" id="CHEBI:15378"/>
        <dbReference type="ChEBI" id="CHEBI:15379"/>
        <dbReference type="ChEBI" id="CHEBI:57870"/>
        <dbReference type="ChEBI" id="CHEBI:58033"/>
        <dbReference type="ChEBI" id="CHEBI:58272"/>
    </reaction>
</comment>
<comment type="cofactor">
    <cofactor evidence="1">
        <name>Mg(2+)</name>
        <dbReference type="ChEBI" id="CHEBI:18420"/>
    </cofactor>
    <text evidence="1">Binds 1 Mg(2+) ion per subunit.</text>
</comment>
<comment type="subunit">
    <text evidence="1">Heterohexadecamer of 8 large chains and 8 small chains; disulfide-linked. The disulfide link is formed within the large subunit homodimers.</text>
</comment>
<comment type="subcellular location">
    <subcellularLocation>
        <location>Plastid</location>
        <location>Chloroplast</location>
    </subcellularLocation>
</comment>
<comment type="PTM">
    <text evidence="1">The disulfide bond which can form in the large chain dimeric partners within the hexadecamer appears to be associated with oxidative stress and protein turnover.</text>
</comment>
<comment type="miscellaneous">
    <text evidence="1">The basic functional RuBisCO is composed of a large chain homodimer in a 'head-to-tail' conformation. In form I RuBisCO this homodimer is arranged in a barrel-like tetramer with the small subunits forming a tetrameric 'cap' on each end of the 'barrel'.</text>
</comment>
<comment type="similarity">
    <text evidence="1">Belongs to the RuBisCO large chain family. Type I subfamily.</text>
</comment>
<proteinExistence type="inferred from homology"/>
<organism>
    <name type="scientific">Pseudolarix amabilis</name>
    <name type="common">Golden larch</name>
    <name type="synonym">Pseudolarix kaempferi</name>
    <dbReference type="NCBI Taxonomy" id="3355"/>
    <lineage>
        <taxon>Eukaryota</taxon>
        <taxon>Viridiplantae</taxon>
        <taxon>Streptophyta</taxon>
        <taxon>Embryophyta</taxon>
        <taxon>Tracheophyta</taxon>
        <taxon>Spermatophyta</taxon>
        <taxon>Pinopsida</taxon>
        <taxon>Pinidae</taxon>
        <taxon>Conifers I</taxon>
        <taxon>Pinales</taxon>
        <taxon>Pinaceae</taxon>
        <taxon>Pseudolarix</taxon>
    </lineage>
</organism>
<gene>
    <name evidence="1" type="primary">rbcL</name>
</gene>
<sequence length="475" mass="52768">MSPKTETKASVGFKAGVKDYRLTYYTPEYQTKDTDILAAFRVTPQPGVPPEEAGAAVAAESSTGTWTTVWTDGLTSLDRYKGRCYDIEPVPGEESQFIAYVAYPLDLFEEGSVTNLFTSIVGNVFGFKALRALRLEDLRIPPAYSKTFQGPPHGIQVERDKLNKYGRPLLGCTIKPKLGLSAKNYGRAVYECLRGGLDFTKDDENVNSQPFMRWRDRFVFCAEAIYKAQAETGEIKGHYLNATAGTCEEMMKRAIFARELGVPIVMHDYLTGGFTANTSLAHYCRDNGLLLHIHRAMHAVIDRQRNHGMHFRVLAKALRMSGGDHIHAGTVVGKLEGERDVTLGFVDLLRDDFIEKDRSRGIYFTQDWVSMPGVLPVASGGIHVWHMPALTEIFGDDSVLQFGGGTLGHPWGNAPGAVANRVALEACVQARNEGRDLAREGNEVIREASKWSPELAAACEIWKEIKFEFDTIDYL</sequence>
<accession>P24681</accession>
<keyword id="KW-0007">Acetylation</keyword>
<keyword id="KW-0113">Calvin cycle</keyword>
<keyword id="KW-0120">Carbon dioxide fixation</keyword>
<keyword id="KW-0150">Chloroplast</keyword>
<keyword id="KW-1015">Disulfide bond</keyword>
<keyword id="KW-0456">Lyase</keyword>
<keyword id="KW-0460">Magnesium</keyword>
<keyword id="KW-0479">Metal-binding</keyword>
<keyword id="KW-0488">Methylation</keyword>
<keyword id="KW-0503">Monooxygenase</keyword>
<keyword id="KW-0560">Oxidoreductase</keyword>
<keyword id="KW-0601">Photorespiration</keyword>
<keyword id="KW-0602">Photosynthesis</keyword>
<keyword id="KW-0934">Plastid</keyword>
<protein>
    <recommendedName>
        <fullName evidence="1">Ribulose bisphosphate carboxylase large chain</fullName>
        <shortName evidence="1">RuBisCO large subunit</shortName>
        <ecNumber evidence="1">4.1.1.39</ecNumber>
    </recommendedName>
</protein>
<geneLocation type="chloroplast"/>
<name>RBL_PSEAD</name>
<evidence type="ECO:0000255" key="1">
    <source>
        <dbReference type="HAMAP-Rule" id="MF_01338"/>
    </source>
</evidence>
<dbReference type="EC" id="4.1.1.39" evidence="1"/>
<dbReference type="EMBL" id="X58782">
    <property type="protein sequence ID" value="CAA41587.1"/>
    <property type="molecule type" value="Genomic_DNA"/>
</dbReference>
<dbReference type="PIR" id="S14648">
    <property type="entry name" value="RKKHLG"/>
</dbReference>
<dbReference type="RefSeq" id="YP_009268396.1">
    <property type="nucleotide sequence ID" value="NC_030631.1"/>
</dbReference>
<dbReference type="SMR" id="P24681"/>
<dbReference type="GeneID" id="31077741"/>
<dbReference type="GO" id="GO:0009507">
    <property type="term" value="C:chloroplast"/>
    <property type="evidence" value="ECO:0007669"/>
    <property type="project" value="UniProtKB-SubCell"/>
</dbReference>
<dbReference type="GO" id="GO:0000287">
    <property type="term" value="F:magnesium ion binding"/>
    <property type="evidence" value="ECO:0007669"/>
    <property type="project" value="UniProtKB-UniRule"/>
</dbReference>
<dbReference type="GO" id="GO:0004497">
    <property type="term" value="F:monooxygenase activity"/>
    <property type="evidence" value="ECO:0007669"/>
    <property type="project" value="UniProtKB-KW"/>
</dbReference>
<dbReference type="GO" id="GO:0016984">
    <property type="term" value="F:ribulose-bisphosphate carboxylase activity"/>
    <property type="evidence" value="ECO:0007669"/>
    <property type="project" value="UniProtKB-UniRule"/>
</dbReference>
<dbReference type="GO" id="GO:0009853">
    <property type="term" value="P:photorespiration"/>
    <property type="evidence" value="ECO:0007669"/>
    <property type="project" value="UniProtKB-KW"/>
</dbReference>
<dbReference type="GO" id="GO:0019253">
    <property type="term" value="P:reductive pentose-phosphate cycle"/>
    <property type="evidence" value="ECO:0007669"/>
    <property type="project" value="UniProtKB-UniRule"/>
</dbReference>
<dbReference type="CDD" id="cd08212">
    <property type="entry name" value="RuBisCO_large_I"/>
    <property type="match status" value="1"/>
</dbReference>
<dbReference type="FunFam" id="3.20.20.110:FF:000001">
    <property type="entry name" value="Ribulose bisphosphate carboxylase large chain"/>
    <property type="match status" value="1"/>
</dbReference>
<dbReference type="FunFam" id="3.30.70.150:FF:000001">
    <property type="entry name" value="Ribulose bisphosphate carboxylase large chain"/>
    <property type="match status" value="1"/>
</dbReference>
<dbReference type="Gene3D" id="3.20.20.110">
    <property type="entry name" value="Ribulose bisphosphate carboxylase, large subunit, C-terminal domain"/>
    <property type="match status" value="1"/>
</dbReference>
<dbReference type="Gene3D" id="3.30.70.150">
    <property type="entry name" value="RuBisCO large subunit, N-terminal domain"/>
    <property type="match status" value="1"/>
</dbReference>
<dbReference type="HAMAP" id="MF_01338">
    <property type="entry name" value="RuBisCO_L_type1"/>
    <property type="match status" value="1"/>
</dbReference>
<dbReference type="InterPro" id="IPR033966">
    <property type="entry name" value="RuBisCO"/>
</dbReference>
<dbReference type="InterPro" id="IPR020878">
    <property type="entry name" value="RuBisCo_large_chain_AS"/>
</dbReference>
<dbReference type="InterPro" id="IPR000685">
    <property type="entry name" value="RuBisCO_lsu_C"/>
</dbReference>
<dbReference type="InterPro" id="IPR036376">
    <property type="entry name" value="RuBisCO_lsu_C_sf"/>
</dbReference>
<dbReference type="InterPro" id="IPR017443">
    <property type="entry name" value="RuBisCO_lsu_fd_N"/>
</dbReference>
<dbReference type="InterPro" id="IPR036422">
    <property type="entry name" value="RuBisCO_lsu_N_sf"/>
</dbReference>
<dbReference type="InterPro" id="IPR020888">
    <property type="entry name" value="RuBisCO_lsuI"/>
</dbReference>
<dbReference type="NCBIfam" id="NF003252">
    <property type="entry name" value="PRK04208.1"/>
    <property type="match status" value="1"/>
</dbReference>
<dbReference type="PANTHER" id="PTHR42704">
    <property type="entry name" value="RIBULOSE BISPHOSPHATE CARBOXYLASE"/>
    <property type="match status" value="1"/>
</dbReference>
<dbReference type="PANTHER" id="PTHR42704:SF15">
    <property type="entry name" value="RIBULOSE BISPHOSPHATE CARBOXYLASE LARGE CHAIN"/>
    <property type="match status" value="1"/>
</dbReference>
<dbReference type="Pfam" id="PF00016">
    <property type="entry name" value="RuBisCO_large"/>
    <property type="match status" value="1"/>
</dbReference>
<dbReference type="Pfam" id="PF02788">
    <property type="entry name" value="RuBisCO_large_N"/>
    <property type="match status" value="1"/>
</dbReference>
<dbReference type="SFLD" id="SFLDG01052">
    <property type="entry name" value="RuBisCO"/>
    <property type="match status" value="1"/>
</dbReference>
<dbReference type="SFLD" id="SFLDS00014">
    <property type="entry name" value="RuBisCO"/>
    <property type="match status" value="1"/>
</dbReference>
<dbReference type="SFLD" id="SFLDG00301">
    <property type="entry name" value="RuBisCO-like_proteins"/>
    <property type="match status" value="1"/>
</dbReference>
<dbReference type="SUPFAM" id="SSF51649">
    <property type="entry name" value="RuBisCo, C-terminal domain"/>
    <property type="match status" value="1"/>
</dbReference>
<dbReference type="SUPFAM" id="SSF54966">
    <property type="entry name" value="RuBisCO, large subunit, small (N-terminal) domain"/>
    <property type="match status" value="1"/>
</dbReference>
<dbReference type="PROSITE" id="PS00157">
    <property type="entry name" value="RUBISCO_LARGE"/>
    <property type="match status" value="1"/>
</dbReference>
<feature type="propeptide" id="PRO_0000031377" evidence="1">
    <location>
        <begin position="1"/>
        <end position="2"/>
    </location>
</feature>
<feature type="chain" id="PRO_0000031378" description="Ribulose bisphosphate carboxylase large chain">
    <location>
        <begin position="3"/>
        <end position="475"/>
    </location>
</feature>
<feature type="active site" description="Proton acceptor" evidence="1">
    <location>
        <position position="175"/>
    </location>
</feature>
<feature type="active site" description="Proton acceptor" evidence="1">
    <location>
        <position position="294"/>
    </location>
</feature>
<feature type="binding site" description="in homodimeric partner" evidence="1">
    <location>
        <position position="123"/>
    </location>
    <ligand>
        <name>substrate</name>
    </ligand>
</feature>
<feature type="binding site" evidence="1">
    <location>
        <position position="173"/>
    </location>
    <ligand>
        <name>substrate</name>
    </ligand>
</feature>
<feature type="binding site" evidence="1">
    <location>
        <position position="177"/>
    </location>
    <ligand>
        <name>substrate</name>
    </ligand>
</feature>
<feature type="binding site" description="via carbamate group" evidence="1">
    <location>
        <position position="201"/>
    </location>
    <ligand>
        <name>Mg(2+)</name>
        <dbReference type="ChEBI" id="CHEBI:18420"/>
    </ligand>
</feature>
<feature type="binding site" evidence="1">
    <location>
        <position position="203"/>
    </location>
    <ligand>
        <name>Mg(2+)</name>
        <dbReference type="ChEBI" id="CHEBI:18420"/>
    </ligand>
</feature>
<feature type="binding site" evidence="1">
    <location>
        <position position="204"/>
    </location>
    <ligand>
        <name>Mg(2+)</name>
        <dbReference type="ChEBI" id="CHEBI:18420"/>
    </ligand>
</feature>
<feature type="binding site" evidence="1">
    <location>
        <position position="295"/>
    </location>
    <ligand>
        <name>substrate</name>
    </ligand>
</feature>
<feature type="binding site" evidence="1">
    <location>
        <position position="327"/>
    </location>
    <ligand>
        <name>substrate</name>
    </ligand>
</feature>
<feature type="binding site" evidence="1">
    <location>
        <position position="379"/>
    </location>
    <ligand>
        <name>substrate</name>
    </ligand>
</feature>
<feature type="site" description="Transition state stabilizer" evidence="1">
    <location>
        <position position="334"/>
    </location>
</feature>
<feature type="modified residue" description="N-acetylproline" evidence="1">
    <location>
        <position position="3"/>
    </location>
</feature>
<feature type="modified residue" description="N6,N6,N6-trimethyllysine" evidence="1">
    <location>
        <position position="14"/>
    </location>
</feature>
<feature type="modified residue" description="N6-carboxylysine" evidence="1">
    <location>
        <position position="201"/>
    </location>
</feature>
<feature type="disulfide bond" description="Interchain; in linked form" evidence="1">
    <location>
        <position position="247"/>
    </location>
</feature>
<reference key="1">
    <citation type="submission" date="1991-03" db="EMBL/GenBank/DDBJ databases">
        <authorList>
            <person name="Doerksen A.H."/>
            <person name="Strauss S."/>
            <person name="Price R."/>
        </authorList>
    </citation>
    <scope>NUCLEOTIDE SEQUENCE [GENOMIC DNA]</scope>
</reference>